<organism>
    <name type="scientific">Lawsonia intracellularis (strain PHE/MN1-00)</name>
    <dbReference type="NCBI Taxonomy" id="363253"/>
    <lineage>
        <taxon>Bacteria</taxon>
        <taxon>Pseudomonadati</taxon>
        <taxon>Thermodesulfobacteriota</taxon>
        <taxon>Desulfovibrionia</taxon>
        <taxon>Desulfovibrionales</taxon>
        <taxon>Desulfovibrionaceae</taxon>
        <taxon>Lawsonia</taxon>
    </lineage>
</organism>
<feature type="chain" id="PRO_1000070889" description="Isoleucine--tRNA ligase">
    <location>
        <begin position="1"/>
        <end position="937"/>
    </location>
</feature>
<feature type="short sequence motif" description="'HIGH' region">
    <location>
        <begin position="58"/>
        <end position="68"/>
    </location>
</feature>
<feature type="short sequence motif" description="'KMSKS' region">
    <location>
        <begin position="607"/>
        <end position="611"/>
    </location>
</feature>
<feature type="binding site" evidence="1">
    <location>
        <position position="566"/>
    </location>
    <ligand>
        <name>L-isoleucyl-5'-AMP</name>
        <dbReference type="ChEBI" id="CHEBI:178002"/>
    </ligand>
</feature>
<feature type="binding site" evidence="1">
    <location>
        <position position="610"/>
    </location>
    <ligand>
        <name>ATP</name>
        <dbReference type="ChEBI" id="CHEBI:30616"/>
    </ligand>
</feature>
<feature type="binding site" evidence="1">
    <location>
        <position position="906"/>
    </location>
    <ligand>
        <name>Zn(2+)</name>
        <dbReference type="ChEBI" id="CHEBI:29105"/>
    </ligand>
</feature>
<feature type="binding site" evidence="1">
    <location>
        <position position="909"/>
    </location>
    <ligand>
        <name>Zn(2+)</name>
        <dbReference type="ChEBI" id="CHEBI:29105"/>
    </ligand>
</feature>
<feature type="binding site" evidence="1">
    <location>
        <position position="925"/>
    </location>
    <ligand>
        <name>Zn(2+)</name>
        <dbReference type="ChEBI" id="CHEBI:29105"/>
    </ligand>
</feature>
<feature type="binding site" evidence="1">
    <location>
        <position position="928"/>
    </location>
    <ligand>
        <name>Zn(2+)</name>
        <dbReference type="ChEBI" id="CHEBI:29105"/>
    </ligand>
</feature>
<gene>
    <name evidence="1" type="primary">ileS</name>
    <name type="ordered locus">LI1051</name>
</gene>
<sequence length="937" mass="107965">MTDYKETLNLPNTTFPMKANLVQREPEIILWWEENAVYEKMLEASGAKGIFILHDGPPYANGHIHLGTALNKILKDIVIKSRNMQGYRSCYVPGWDCHGLPIELKVEQELGKKKQEMPLSLIRNRCREYAEKFLDIQREEFKRLGVFGSWDHPYQTMDPIYESVITLELARFVEKGSVIRSKKPIYWCYSCETALAEAEVEYADHTSSAIFVRFPIHDKRLHTIFPQADLTTTSIVIWTTTPWTLPSNMAIALNADFDYALLQYKNEYIIIASELVDICLKQFNWEDAKVIKVVQGKDLEGMKARHPLYDQESMIVLGDHVTLEAGTGCVHTAPGHGPEDYEVALRYNLDVYSPLDDQGRYLDTVKFFAGLRVDQANPVVIQKLEEFHRIIQKNTIQHSYPHCWRCKSPVIFRATTQWFISMEKNNLREQSLKAIKKNIEWIPSWGEDRIYNMIASRPDWCISRQRIWGVPIVALICESCGEVWNDPSWMKKIAEFFAIHPRGCDYWYEAKLEDIVPVGLKCPHCEGEQWKRESDILDVWFDSGSSFAAVLEERPNLGFPADLYLEGSDQHRGWFHSSLLISIGTRGVPPYHAVLTHGYVVDGDGRKMSKSMGNVTSPQEIISKFGVEILRLWVSSVDYREDVRISNEILQRLVDAYRRIRNTCRYLLGNINDLTLDELVPVKEMESLDQYILDVVATAYTEIQKSYISYDFHTVFHKLHNLCTTDLSAFYLDILKDRLYTSGVRSHKRKSAQTALFYILHMLLRSMAPILSFTAEEVYKYIPDTLKDDNVISVFMLPFFETSSFLLDDRVRSYWETLLLIRAEVNQAIEPMRKKGEIGHSLDTHITLYVAPELHTLLLELNTDLCSLFIVSQLDIMPLSEASVDAAVSKIDGLAVAVNRAQGNKCQRCWMYKELGSNHQYPTLCPRCTEVVENMKI</sequence>
<evidence type="ECO:0000255" key="1">
    <source>
        <dbReference type="HAMAP-Rule" id="MF_02002"/>
    </source>
</evidence>
<name>SYI_LAWIP</name>
<reference key="1">
    <citation type="submission" date="2005-11" db="EMBL/GenBank/DDBJ databases">
        <title>The complete genome sequence of Lawsonia intracellularis: the causative agent of proliferative enteropathy.</title>
        <authorList>
            <person name="Kaur K."/>
            <person name="Zhang Q."/>
            <person name="Beckler D."/>
            <person name="Munir S."/>
            <person name="Li L."/>
            <person name="Kinsley K."/>
            <person name="Herron L."/>
            <person name="Peterson A."/>
            <person name="May B."/>
            <person name="Singh S."/>
            <person name="Gebhart C."/>
            <person name="Kapur V."/>
        </authorList>
    </citation>
    <scope>NUCLEOTIDE SEQUENCE [LARGE SCALE GENOMIC DNA]</scope>
    <source>
        <strain>PHE/MN1-00</strain>
    </source>
</reference>
<proteinExistence type="inferred from homology"/>
<comment type="function">
    <text evidence="1">Catalyzes the attachment of isoleucine to tRNA(Ile). As IleRS can inadvertently accommodate and process structurally similar amino acids such as valine, to avoid such errors it has two additional distinct tRNA(Ile)-dependent editing activities. One activity is designated as 'pretransfer' editing and involves the hydrolysis of activated Val-AMP. The other activity is designated 'posttransfer' editing and involves deacylation of mischarged Val-tRNA(Ile).</text>
</comment>
<comment type="catalytic activity">
    <reaction evidence="1">
        <text>tRNA(Ile) + L-isoleucine + ATP = L-isoleucyl-tRNA(Ile) + AMP + diphosphate</text>
        <dbReference type="Rhea" id="RHEA:11060"/>
        <dbReference type="Rhea" id="RHEA-COMP:9666"/>
        <dbReference type="Rhea" id="RHEA-COMP:9695"/>
        <dbReference type="ChEBI" id="CHEBI:30616"/>
        <dbReference type="ChEBI" id="CHEBI:33019"/>
        <dbReference type="ChEBI" id="CHEBI:58045"/>
        <dbReference type="ChEBI" id="CHEBI:78442"/>
        <dbReference type="ChEBI" id="CHEBI:78528"/>
        <dbReference type="ChEBI" id="CHEBI:456215"/>
        <dbReference type="EC" id="6.1.1.5"/>
    </reaction>
</comment>
<comment type="cofactor">
    <cofactor evidence="1">
        <name>Zn(2+)</name>
        <dbReference type="ChEBI" id="CHEBI:29105"/>
    </cofactor>
    <text evidence="1">Binds 1 zinc ion per subunit.</text>
</comment>
<comment type="subunit">
    <text evidence="1">Monomer.</text>
</comment>
<comment type="subcellular location">
    <subcellularLocation>
        <location evidence="1">Cytoplasm</location>
    </subcellularLocation>
</comment>
<comment type="domain">
    <text evidence="1">IleRS has two distinct active sites: one for aminoacylation and one for editing. The misactivated valine is translocated from the active site to the editing site, which sterically excludes the correctly activated isoleucine. The single editing site contains two valyl binding pockets, one specific for each substrate (Val-AMP or Val-tRNA(Ile)).</text>
</comment>
<comment type="similarity">
    <text evidence="1">Belongs to the class-I aminoacyl-tRNA synthetase family. IleS type 1 subfamily.</text>
</comment>
<protein>
    <recommendedName>
        <fullName evidence="1">Isoleucine--tRNA ligase</fullName>
        <ecNumber evidence="1">6.1.1.5</ecNumber>
    </recommendedName>
    <alternativeName>
        <fullName evidence="1">Isoleucyl-tRNA synthetase</fullName>
        <shortName evidence="1">IleRS</shortName>
    </alternativeName>
</protein>
<keyword id="KW-0030">Aminoacyl-tRNA synthetase</keyword>
<keyword id="KW-0067">ATP-binding</keyword>
<keyword id="KW-0963">Cytoplasm</keyword>
<keyword id="KW-0436">Ligase</keyword>
<keyword id="KW-0479">Metal-binding</keyword>
<keyword id="KW-0547">Nucleotide-binding</keyword>
<keyword id="KW-0648">Protein biosynthesis</keyword>
<keyword id="KW-1185">Reference proteome</keyword>
<keyword id="KW-0862">Zinc</keyword>
<accession>Q1MPH2</accession>
<dbReference type="EC" id="6.1.1.5" evidence="1"/>
<dbReference type="EMBL" id="AM180252">
    <property type="protein sequence ID" value="CAJ55105.1"/>
    <property type="molecule type" value="Genomic_DNA"/>
</dbReference>
<dbReference type="RefSeq" id="WP_011527134.1">
    <property type="nucleotide sequence ID" value="NC_008011.1"/>
</dbReference>
<dbReference type="SMR" id="Q1MPH2"/>
<dbReference type="STRING" id="363253.LI1051"/>
<dbReference type="KEGG" id="lip:LI1051"/>
<dbReference type="eggNOG" id="COG0060">
    <property type="taxonomic scope" value="Bacteria"/>
</dbReference>
<dbReference type="HOGENOM" id="CLU_001493_7_1_7"/>
<dbReference type="OrthoDB" id="9810365at2"/>
<dbReference type="Proteomes" id="UP000002430">
    <property type="component" value="Chromosome"/>
</dbReference>
<dbReference type="GO" id="GO:0005829">
    <property type="term" value="C:cytosol"/>
    <property type="evidence" value="ECO:0007669"/>
    <property type="project" value="TreeGrafter"/>
</dbReference>
<dbReference type="GO" id="GO:0002161">
    <property type="term" value="F:aminoacyl-tRNA deacylase activity"/>
    <property type="evidence" value="ECO:0007669"/>
    <property type="project" value="InterPro"/>
</dbReference>
<dbReference type="GO" id="GO:0005524">
    <property type="term" value="F:ATP binding"/>
    <property type="evidence" value="ECO:0007669"/>
    <property type="project" value="UniProtKB-UniRule"/>
</dbReference>
<dbReference type="GO" id="GO:0004822">
    <property type="term" value="F:isoleucine-tRNA ligase activity"/>
    <property type="evidence" value="ECO:0007669"/>
    <property type="project" value="UniProtKB-UniRule"/>
</dbReference>
<dbReference type="GO" id="GO:0000049">
    <property type="term" value="F:tRNA binding"/>
    <property type="evidence" value="ECO:0007669"/>
    <property type="project" value="InterPro"/>
</dbReference>
<dbReference type="GO" id="GO:0008270">
    <property type="term" value="F:zinc ion binding"/>
    <property type="evidence" value="ECO:0007669"/>
    <property type="project" value="UniProtKB-UniRule"/>
</dbReference>
<dbReference type="GO" id="GO:0006428">
    <property type="term" value="P:isoleucyl-tRNA aminoacylation"/>
    <property type="evidence" value="ECO:0007669"/>
    <property type="project" value="UniProtKB-UniRule"/>
</dbReference>
<dbReference type="CDD" id="cd07960">
    <property type="entry name" value="Anticodon_Ia_Ile_BEm"/>
    <property type="match status" value="1"/>
</dbReference>
<dbReference type="CDD" id="cd00818">
    <property type="entry name" value="IleRS_core"/>
    <property type="match status" value="1"/>
</dbReference>
<dbReference type="FunFam" id="1.10.730.20:FF:000001">
    <property type="entry name" value="Isoleucine--tRNA ligase"/>
    <property type="match status" value="1"/>
</dbReference>
<dbReference type="FunFam" id="3.40.50.620:FF:000042">
    <property type="entry name" value="Isoleucine--tRNA ligase"/>
    <property type="match status" value="1"/>
</dbReference>
<dbReference type="Gene3D" id="1.10.730.20">
    <property type="match status" value="1"/>
</dbReference>
<dbReference type="Gene3D" id="3.40.50.620">
    <property type="entry name" value="HUPs"/>
    <property type="match status" value="2"/>
</dbReference>
<dbReference type="Gene3D" id="1.10.10.830">
    <property type="entry name" value="Ile-tRNA synthetase CP2 domain-like"/>
    <property type="match status" value="1"/>
</dbReference>
<dbReference type="Gene3D" id="3.90.740.10">
    <property type="entry name" value="Valyl/Leucyl/Isoleucyl-tRNA synthetase, editing domain"/>
    <property type="match status" value="1"/>
</dbReference>
<dbReference type="HAMAP" id="MF_02002">
    <property type="entry name" value="Ile_tRNA_synth_type1"/>
    <property type="match status" value="1"/>
</dbReference>
<dbReference type="InterPro" id="IPR001412">
    <property type="entry name" value="aa-tRNA-synth_I_CS"/>
</dbReference>
<dbReference type="InterPro" id="IPR002300">
    <property type="entry name" value="aa-tRNA-synth_Ia"/>
</dbReference>
<dbReference type="InterPro" id="IPR033708">
    <property type="entry name" value="Anticodon_Ile_BEm"/>
</dbReference>
<dbReference type="InterPro" id="IPR002301">
    <property type="entry name" value="Ile-tRNA-ligase"/>
</dbReference>
<dbReference type="InterPro" id="IPR023585">
    <property type="entry name" value="Ile-tRNA-ligase_type1"/>
</dbReference>
<dbReference type="InterPro" id="IPR050081">
    <property type="entry name" value="Ile-tRNA_ligase"/>
</dbReference>
<dbReference type="InterPro" id="IPR013155">
    <property type="entry name" value="M/V/L/I-tRNA-synth_anticd-bd"/>
</dbReference>
<dbReference type="InterPro" id="IPR014729">
    <property type="entry name" value="Rossmann-like_a/b/a_fold"/>
</dbReference>
<dbReference type="InterPro" id="IPR009080">
    <property type="entry name" value="tRNAsynth_Ia_anticodon-bd"/>
</dbReference>
<dbReference type="InterPro" id="IPR009008">
    <property type="entry name" value="Val/Leu/Ile-tRNA-synth_edit"/>
</dbReference>
<dbReference type="InterPro" id="IPR010663">
    <property type="entry name" value="Znf_FPG/IleRS"/>
</dbReference>
<dbReference type="NCBIfam" id="TIGR00392">
    <property type="entry name" value="ileS"/>
    <property type="match status" value="1"/>
</dbReference>
<dbReference type="PANTHER" id="PTHR42765:SF1">
    <property type="entry name" value="ISOLEUCINE--TRNA LIGASE, MITOCHONDRIAL"/>
    <property type="match status" value="1"/>
</dbReference>
<dbReference type="PANTHER" id="PTHR42765">
    <property type="entry name" value="SOLEUCYL-TRNA SYNTHETASE"/>
    <property type="match status" value="1"/>
</dbReference>
<dbReference type="Pfam" id="PF08264">
    <property type="entry name" value="Anticodon_1"/>
    <property type="match status" value="1"/>
</dbReference>
<dbReference type="Pfam" id="PF00133">
    <property type="entry name" value="tRNA-synt_1"/>
    <property type="match status" value="1"/>
</dbReference>
<dbReference type="Pfam" id="PF06827">
    <property type="entry name" value="zf-FPG_IleRS"/>
    <property type="match status" value="1"/>
</dbReference>
<dbReference type="PRINTS" id="PR00984">
    <property type="entry name" value="TRNASYNTHILE"/>
</dbReference>
<dbReference type="SUPFAM" id="SSF47323">
    <property type="entry name" value="Anticodon-binding domain of a subclass of class I aminoacyl-tRNA synthetases"/>
    <property type="match status" value="1"/>
</dbReference>
<dbReference type="SUPFAM" id="SSF52374">
    <property type="entry name" value="Nucleotidylyl transferase"/>
    <property type="match status" value="1"/>
</dbReference>
<dbReference type="SUPFAM" id="SSF50677">
    <property type="entry name" value="ValRS/IleRS/LeuRS editing domain"/>
    <property type="match status" value="1"/>
</dbReference>
<dbReference type="PROSITE" id="PS00178">
    <property type="entry name" value="AA_TRNA_LIGASE_I"/>
    <property type="match status" value="1"/>
</dbReference>